<feature type="chain" id="PRO_0000419519" description="Feruloyl CoA ortho-hydroxylase 2">
    <location>
        <begin position="1"/>
        <end position="361"/>
    </location>
</feature>
<feature type="domain" description="Fe2OG dioxygenase" evidence="2">
    <location>
        <begin position="211"/>
        <end position="312"/>
    </location>
</feature>
<feature type="binding site" evidence="1">
    <location>
        <position position="220"/>
    </location>
    <ligand>
        <name>2-oxoglutarate</name>
        <dbReference type="ChEBI" id="CHEBI:16810"/>
    </ligand>
</feature>
<feature type="binding site" evidence="2">
    <location>
        <position position="235"/>
    </location>
    <ligand>
        <name>Fe cation</name>
        <dbReference type="ChEBI" id="CHEBI:24875"/>
    </ligand>
</feature>
<feature type="binding site" evidence="2">
    <location>
        <position position="237"/>
    </location>
    <ligand>
        <name>Fe cation</name>
        <dbReference type="ChEBI" id="CHEBI:24875"/>
    </ligand>
</feature>
<feature type="binding site" evidence="2">
    <location>
        <position position="293"/>
    </location>
    <ligand>
        <name>Fe cation</name>
        <dbReference type="ChEBI" id="CHEBI:24875"/>
    </ligand>
</feature>
<feature type="binding site" evidence="2">
    <location>
        <position position="303"/>
    </location>
    <ligand>
        <name>2-oxoglutarate</name>
        <dbReference type="ChEBI" id="CHEBI:16810"/>
    </ligand>
</feature>
<feature type="binding site" evidence="1">
    <location>
        <position position="305"/>
    </location>
    <ligand>
        <name>2-oxoglutarate</name>
        <dbReference type="ChEBI" id="CHEBI:16810"/>
    </ligand>
</feature>
<evidence type="ECO:0000250" key="1">
    <source>
        <dbReference type="UniProtKB" id="D4N500"/>
    </source>
</evidence>
<evidence type="ECO:0000255" key="2">
    <source>
        <dbReference type="PROSITE-ProRule" id="PRU00805"/>
    </source>
</evidence>
<evidence type="ECO:0000269" key="3">
    <source>
    </source>
</evidence>
<evidence type="ECO:0000303" key="4">
    <source>
    </source>
</evidence>
<evidence type="ECO:0000305" key="5"/>
<evidence type="ECO:0000312" key="6">
    <source>
        <dbReference type="Araport" id="AT1G55290"/>
    </source>
</evidence>
<evidence type="ECO:0000312" key="7">
    <source>
        <dbReference type="EMBL" id="AAG51560.1"/>
    </source>
</evidence>
<comment type="function">
    <text evidence="3">2-oxoglutarate (OG)- and Fe(II)-dependent dioxygenase (2OGD)involved in scopoletin biosynthesis. Converts feruloyl CoA into 6'-hydroxyferuloyl CoA but has no activity with ferulic acid, feruloylquinic acid, caffeic acid, caffeoyl CoA, p-coumaric acid, cinnamic acid, cinnamoyl CoA or benzoyl CoA.</text>
</comment>
<comment type="catalytic activity">
    <reaction evidence="3">
        <text>(E)-feruloyl-CoA + 2-oxoglutarate + O2 = (E)-6-hydroxyferuloyl-CoA + succinate + CO2</text>
        <dbReference type="Rhea" id="RHEA:57856"/>
        <dbReference type="ChEBI" id="CHEBI:15379"/>
        <dbReference type="ChEBI" id="CHEBI:16526"/>
        <dbReference type="ChEBI" id="CHEBI:16810"/>
        <dbReference type="ChEBI" id="CHEBI:30031"/>
        <dbReference type="ChEBI" id="CHEBI:87305"/>
        <dbReference type="ChEBI" id="CHEBI:142390"/>
        <dbReference type="EC" id="1.14.11.61"/>
    </reaction>
</comment>
<comment type="catalytic activity">
    <reaction evidence="3">
        <text>(E)-6-hydroxyferuloyl-CoA = scopoletin + CoA</text>
        <dbReference type="Rhea" id="RHEA:57860"/>
        <dbReference type="ChEBI" id="CHEBI:17488"/>
        <dbReference type="ChEBI" id="CHEBI:57287"/>
        <dbReference type="ChEBI" id="CHEBI:142390"/>
    </reaction>
</comment>
<comment type="cofactor">
    <cofactor evidence="3">
        <name>L-ascorbate</name>
        <dbReference type="ChEBI" id="CHEBI:38290"/>
    </cofactor>
</comment>
<comment type="cofactor">
    <cofactor evidence="2">
        <name>Fe(2+)</name>
        <dbReference type="ChEBI" id="CHEBI:29033"/>
    </cofactor>
    <text evidence="2">Binds 1 Fe(2+) ion per subunit.</text>
</comment>
<comment type="biophysicochemical properties">
    <kinetics>
        <KM evidence="3">14.5 uM for feruloyl CoA</KM>
        <text evidence="3">kcat is 4.79 sec(-1) with feruloyl CoA as substrate.</text>
    </kinetics>
    <phDependence>
        <text evidence="3">Optimum pH is 6.5.</text>
    </phDependence>
</comment>
<comment type="tissue specificity">
    <text evidence="3">Low expression in roots.</text>
</comment>
<comment type="induction">
    <text evidence="3">Not induced by 2,4-D treatment.</text>
</comment>
<comment type="disruption phenotype">
    <text evidence="3">No effect on scopoletin and scopolin levels in the roots.</text>
</comment>
<comment type="similarity">
    <text evidence="5">Belongs to the iron/ascorbate-dependent oxidoreductase family.</text>
</comment>
<sequence length="361" mass="40876">MNQTLAAQFLTRDQVTNFVVHEGNGVKGLSETGIKVLPDQYIQPFEERLINFHVKEDSDESIPVIDISNLDEKSVSKAVCDAAEEWGFFQVINHGVSMEVLENMKTATHRFFGLPVEEKRKFSREKSLSTNVRFGTSFSPHAEKALEWKDYLSLFFVSEAEASQLWPDSCRSETLEYMNETKPLVKKLLRFLGENLNVKELDKTKESFFMGSTRINLNYYPICPNPELTVGVGRHSDVSSLTILLQDEIGGLHVRSLTTGRWVHVPPISGSLVINIGDAMQIMSNGRYKSVEHRVLANGSYNRISVPIFVSPKPESVIGPLLEVIENGEKPVYKDILYTDYVKHFFRKAHDGKKTIDFANI</sequence>
<proteinExistence type="evidence at protein level"/>
<gene>
    <name evidence="4" type="primary">F6'H2</name>
    <name evidence="6" type="ordered locus">At1g55290</name>
    <name evidence="7" type="ORF">F7A10.24</name>
</gene>
<protein>
    <recommendedName>
        <fullName evidence="4">Feruloyl CoA ortho-hydroxylase 2</fullName>
        <ecNumber evidence="3">1.14.11.61</ecNumber>
    </recommendedName>
</protein>
<organism>
    <name type="scientific">Arabidopsis thaliana</name>
    <name type="common">Mouse-ear cress</name>
    <dbReference type="NCBI Taxonomy" id="3702"/>
    <lineage>
        <taxon>Eukaryota</taxon>
        <taxon>Viridiplantae</taxon>
        <taxon>Streptophyta</taxon>
        <taxon>Embryophyta</taxon>
        <taxon>Tracheophyta</taxon>
        <taxon>Spermatophyta</taxon>
        <taxon>Magnoliopsida</taxon>
        <taxon>eudicotyledons</taxon>
        <taxon>Gunneridae</taxon>
        <taxon>Pentapetalae</taxon>
        <taxon>rosids</taxon>
        <taxon>malvids</taxon>
        <taxon>Brassicales</taxon>
        <taxon>Brassicaceae</taxon>
        <taxon>Camelineae</taxon>
        <taxon>Arabidopsis</taxon>
    </lineage>
</organism>
<dbReference type="EC" id="1.14.11.61" evidence="3"/>
<dbReference type="EMBL" id="AC027034">
    <property type="protein sequence ID" value="AAG51560.1"/>
    <property type="molecule type" value="Genomic_DNA"/>
</dbReference>
<dbReference type="EMBL" id="CP002684">
    <property type="protein sequence ID" value="AEE33219.1"/>
    <property type="molecule type" value="Genomic_DNA"/>
</dbReference>
<dbReference type="EMBL" id="BT011228">
    <property type="protein sequence ID" value="AAR92264.1"/>
    <property type="molecule type" value="mRNA"/>
</dbReference>
<dbReference type="EMBL" id="BT012156">
    <property type="protein sequence ID" value="AAS76251.1"/>
    <property type="molecule type" value="mRNA"/>
</dbReference>
<dbReference type="PIR" id="H96594">
    <property type="entry name" value="H96594"/>
</dbReference>
<dbReference type="RefSeq" id="NP_175925.1">
    <property type="nucleotide sequence ID" value="NM_104404.4"/>
</dbReference>
<dbReference type="SMR" id="Q9C899"/>
<dbReference type="BioGRID" id="27199">
    <property type="interactions" value="1"/>
</dbReference>
<dbReference type="FunCoup" id="Q9C899">
    <property type="interactions" value="1"/>
</dbReference>
<dbReference type="IntAct" id="Q9C899">
    <property type="interactions" value="1"/>
</dbReference>
<dbReference type="STRING" id="3702.Q9C899"/>
<dbReference type="PaxDb" id="3702-AT1G55290.1"/>
<dbReference type="ProteomicsDB" id="222259"/>
<dbReference type="EnsemblPlants" id="AT1G55290.1">
    <property type="protein sequence ID" value="AT1G55290.1"/>
    <property type="gene ID" value="AT1G55290"/>
</dbReference>
<dbReference type="GeneID" id="841974"/>
<dbReference type="Gramene" id="AT1G55290.1">
    <property type="protein sequence ID" value="AT1G55290.1"/>
    <property type="gene ID" value="AT1G55290"/>
</dbReference>
<dbReference type="KEGG" id="ath:AT1G55290"/>
<dbReference type="Araport" id="AT1G55290"/>
<dbReference type="TAIR" id="AT1G55290">
    <property type="gene designation" value="F6'H2"/>
</dbReference>
<dbReference type="eggNOG" id="KOG0143">
    <property type="taxonomic scope" value="Eukaryota"/>
</dbReference>
<dbReference type="HOGENOM" id="CLU_010119_16_4_1"/>
<dbReference type="InParanoid" id="Q9C899"/>
<dbReference type="OMA" id="YNFFRSP"/>
<dbReference type="OrthoDB" id="288590at2759"/>
<dbReference type="PhylomeDB" id="Q9C899"/>
<dbReference type="BioCyc" id="ARA:AT1G55290-MONOMER"/>
<dbReference type="PRO" id="PR:Q9C899"/>
<dbReference type="Proteomes" id="UP000006548">
    <property type="component" value="Chromosome 1"/>
</dbReference>
<dbReference type="ExpressionAtlas" id="Q9C899">
    <property type="expression patterns" value="baseline and differential"/>
</dbReference>
<dbReference type="GO" id="GO:0051213">
    <property type="term" value="F:dioxygenase activity"/>
    <property type="evidence" value="ECO:0007669"/>
    <property type="project" value="UniProtKB-KW"/>
</dbReference>
<dbReference type="GO" id="GO:0046872">
    <property type="term" value="F:metal ion binding"/>
    <property type="evidence" value="ECO:0007669"/>
    <property type="project" value="UniProtKB-KW"/>
</dbReference>
<dbReference type="FunFam" id="2.60.120.330:FF:000023">
    <property type="entry name" value="Feruloyl CoA ortho-hydroxylase 1"/>
    <property type="match status" value="1"/>
</dbReference>
<dbReference type="Gene3D" id="2.60.120.330">
    <property type="entry name" value="B-lactam Antibiotic, Isopenicillin N Synthase, Chain"/>
    <property type="match status" value="1"/>
</dbReference>
<dbReference type="InterPro" id="IPR026992">
    <property type="entry name" value="DIOX_N"/>
</dbReference>
<dbReference type="InterPro" id="IPR044861">
    <property type="entry name" value="IPNS-like_FE2OG_OXY"/>
</dbReference>
<dbReference type="InterPro" id="IPR027443">
    <property type="entry name" value="IPNS-like_sf"/>
</dbReference>
<dbReference type="InterPro" id="IPR005123">
    <property type="entry name" value="Oxoglu/Fe-dep_dioxygenase_dom"/>
</dbReference>
<dbReference type="InterPro" id="IPR050295">
    <property type="entry name" value="Plant_2OG-oxidoreductases"/>
</dbReference>
<dbReference type="PANTHER" id="PTHR47991">
    <property type="entry name" value="OXOGLUTARATE/IRON-DEPENDENT DIOXYGENASE"/>
    <property type="match status" value="1"/>
</dbReference>
<dbReference type="Pfam" id="PF03171">
    <property type="entry name" value="2OG-FeII_Oxy"/>
    <property type="match status" value="1"/>
</dbReference>
<dbReference type="Pfam" id="PF14226">
    <property type="entry name" value="DIOX_N"/>
    <property type="match status" value="1"/>
</dbReference>
<dbReference type="SUPFAM" id="SSF51197">
    <property type="entry name" value="Clavaminate synthase-like"/>
    <property type="match status" value="1"/>
</dbReference>
<dbReference type="PROSITE" id="PS51471">
    <property type="entry name" value="FE2OG_OXY"/>
    <property type="match status" value="1"/>
</dbReference>
<keyword id="KW-0223">Dioxygenase</keyword>
<keyword id="KW-0408">Iron</keyword>
<keyword id="KW-0479">Metal-binding</keyword>
<keyword id="KW-0560">Oxidoreductase</keyword>
<keyword id="KW-1185">Reference proteome</keyword>
<name>F6H2_ARATH</name>
<accession>Q9C899</accession>
<reference key="1">
    <citation type="journal article" date="2000" name="Nature">
        <title>Sequence and analysis of chromosome 1 of the plant Arabidopsis thaliana.</title>
        <authorList>
            <person name="Theologis A."/>
            <person name="Ecker J.R."/>
            <person name="Palm C.J."/>
            <person name="Federspiel N.A."/>
            <person name="Kaul S."/>
            <person name="White O."/>
            <person name="Alonso J."/>
            <person name="Altafi H."/>
            <person name="Araujo R."/>
            <person name="Bowman C.L."/>
            <person name="Brooks S.Y."/>
            <person name="Buehler E."/>
            <person name="Chan A."/>
            <person name="Chao Q."/>
            <person name="Chen H."/>
            <person name="Cheuk R.F."/>
            <person name="Chin C.W."/>
            <person name="Chung M.K."/>
            <person name="Conn L."/>
            <person name="Conway A.B."/>
            <person name="Conway A.R."/>
            <person name="Creasy T.H."/>
            <person name="Dewar K."/>
            <person name="Dunn P."/>
            <person name="Etgu P."/>
            <person name="Feldblyum T.V."/>
            <person name="Feng J.-D."/>
            <person name="Fong B."/>
            <person name="Fujii C.Y."/>
            <person name="Gill J.E."/>
            <person name="Goldsmith A.D."/>
            <person name="Haas B."/>
            <person name="Hansen N.F."/>
            <person name="Hughes B."/>
            <person name="Huizar L."/>
            <person name="Hunter J.L."/>
            <person name="Jenkins J."/>
            <person name="Johnson-Hopson C."/>
            <person name="Khan S."/>
            <person name="Khaykin E."/>
            <person name="Kim C.J."/>
            <person name="Koo H.L."/>
            <person name="Kremenetskaia I."/>
            <person name="Kurtz D.B."/>
            <person name="Kwan A."/>
            <person name="Lam B."/>
            <person name="Langin-Hooper S."/>
            <person name="Lee A."/>
            <person name="Lee J.M."/>
            <person name="Lenz C.A."/>
            <person name="Li J.H."/>
            <person name="Li Y.-P."/>
            <person name="Lin X."/>
            <person name="Liu S.X."/>
            <person name="Liu Z.A."/>
            <person name="Luros J.S."/>
            <person name="Maiti R."/>
            <person name="Marziali A."/>
            <person name="Militscher J."/>
            <person name="Miranda M."/>
            <person name="Nguyen M."/>
            <person name="Nierman W.C."/>
            <person name="Osborne B.I."/>
            <person name="Pai G."/>
            <person name="Peterson J."/>
            <person name="Pham P.K."/>
            <person name="Rizzo M."/>
            <person name="Rooney T."/>
            <person name="Rowley D."/>
            <person name="Sakano H."/>
            <person name="Salzberg S.L."/>
            <person name="Schwartz J.R."/>
            <person name="Shinn P."/>
            <person name="Southwick A.M."/>
            <person name="Sun H."/>
            <person name="Tallon L.J."/>
            <person name="Tambunga G."/>
            <person name="Toriumi M.J."/>
            <person name="Town C.D."/>
            <person name="Utterback T."/>
            <person name="Van Aken S."/>
            <person name="Vaysberg M."/>
            <person name="Vysotskaia V.S."/>
            <person name="Walker M."/>
            <person name="Wu D."/>
            <person name="Yu G."/>
            <person name="Fraser C.M."/>
            <person name="Venter J.C."/>
            <person name="Davis R.W."/>
        </authorList>
    </citation>
    <scope>NUCLEOTIDE SEQUENCE [LARGE SCALE GENOMIC DNA]</scope>
    <source>
        <strain>cv. Columbia</strain>
    </source>
</reference>
<reference key="2">
    <citation type="journal article" date="2017" name="Plant J.">
        <title>Araport11: a complete reannotation of the Arabidopsis thaliana reference genome.</title>
        <authorList>
            <person name="Cheng C.Y."/>
            <person name="Krishnakumar V."/>
            <person name="Chan A.P."/>
            <person name="Thibaud-Nissen F."/>
            <person name="Schobel S."/>
            <person name="Town C.D."/>
        </authorList>
    </citation>
    <scope>GENOME REANNOTATION</scope>
    <source>
        <strain>cv. Columbia</strain>
    </source>
</reference>
<reference key="3">
    <citation type="submission" date="2004-03" db="EMBL/GenBank/DDBJ databases">
        <title>Arabidopsis ORF clones.</title>
        <authorList>
            <person name="Kim C.J."/>
            <person name="Chen H."/>
            <person name="Cheuk R."/>
            <person name="Shinn P."/>
            <person name="Ecker J.R."/>
        </authorList>
    </citation>
    <scope>NUCLEOTIDE SEQUENCE [LARGE SCALE MRNA]</scope>
</reference>
<reference key="4">
    <citation type="journal article" date="2008" name="Plant J.">
        <title>Scopoletin is biosynthesized via ortho-hydroxylation of feruloyl CoA by a 2-oxoglutarate-dependent dioxygenase in Arabidopsis thaliana.</title>
        <authorList>
            <person name="Kai K."/>
            <person name="Mizutani M."/>
            <person name="Kawamura N."/>
            <person name="Yamamoto R."/>
            <person name="Tamai M."/>
            <person name="Yamaguchi H."/>
            <person name="Sakata K."/>
            <person name="Shimizu B."/>
        </authorList>
    </citation>
    <scope>FUNCTION</scope>
    <scope>CATALYTIC ACTIVITY</scope>
    <scope>COFACTOR</scope>
    <scope>TISSUE SPECIFICITY</scope>
    <scope>DISRUPTION PHENOTYPE</scope>
    <scope>INDUCTION</scope>
    <scope>BIOPHYSICOCHEMICAL PROPERTIES</scope>
</reference>